<protein>
    <recommendedName>
        <fullName evidence="7">Inactive metallocarboxypeptidase ECM14</fullName>
    </recommendedName>
</protein>
<sequence length="597" mass="67624">MRLFTHGQVLALLAFVNTISATPSFSTNSYPAHPAEPVSLFSQHQPQAPLGLWTRLRNSVIERVWGVPPQQRHRGGNKHQYPPFSAPASLRARYGDDVVLRFKLQTADEVKALVEASNILFLDVWSSTDEWIDIRLAKDVVPSLLGLLPKSLQTTHVPLIRDLPQTIYESYPSPSQSPSGRERGFLPSGEPSSDVTNIFFENYQPLSVIVPWMRLLASMFPSHAQFISIGSSFEGRDIPALRVGVRPANDQKPRRTLIIEGGSHAREWIGVSTVNYVAYSLITSYGKSKPISTLLEQFDFIFIPTINPDGYVYTWETDRLWRKNRQETSLPFCPGVDLDRTWGFEWNGNATGDNPCLESYGGDKPFAGVEAHQLAEWVKEQTEQRNTKFVAYMDLHSYSQQILYPYSYSCLYQPPNLENLEELAMGIAKAIRLTNRKTYAVSSACGGLMASQKKKAKPETFLRMESTGGSALDWFYHDFGVKYAYQLKLRDRGSYGFLLPRENIVPTGKEVFNAVMMLGRFLLGESNAFQELDWDAGFQRPKKDDKPILNDDDDDDADTNDDGIGRKDDSWIPDEYKGDNDRDESDGGWAFRRLRKR</sequence>
<comment type="function">
    <text evidence="3">Inactive carboxypeptidase that may play a role in cell wall organization and biogenesis.</text>
</comment>
<comment type="cofactor">
    <cofactor evidence="1">
        <name>Zn(2+)</name>
        <dbReference type="ChEBI" id="CHEBI:29105"/>
    </cofactor>
    <text evidence="1">Binds 1 zinc ion per subunit.</text>
</comment>
<comment type="subcellular location">
    <subcellularLocation>
        <location evidence="3">Vacuole</location>
    </subcellularLocation>
    <subcellularLocation>
        <location evidence="3">Secreted</location>
    </subcellularLocation>
</comment>
<comment type="similarity">
    <text evidence="7">Belongs to the peptidase M14 family.</text>
</comment>
<comment type="caution">
    <text evidence="3">Lacks the conserved Glu residue in position 488 essential for carbopeptidase activity. The mature form lacks catalytic activity towards synthetic peptide substrates.</text>
</comment>
<gene>
    <name type="primary">ECM14</name>
    <name type="ORF">HCBG_04538</name>
</gene>
<dbReference type="EMBL" id="GG663367">
    <property type="protein sequence ID" value="EEH07659.1"/>
    <property type="molecule type" value="Genomic_DNA"/>
</dbReference>
<dbReference type="SMR" id="C0NM08"/>
<dbReference type="FunCoup" id="C0NM08">
    <property type="interactions" value="773"/>
</dbReference>
<dbReference type="STRING" id="447093.C0NM08"/>
<dbReference type="GlyCosmos" id="C0NM08">
    <property type="glycosylation" value="1 site, No reported glycans"/>
</dbReference>
<dbReference type="VEuPathDB" id="FungiDB:I7I50_11222"/>
<dbReference type="HOGENOM" id="CLU_019326_1_0_1"/>
<dbReference type="InParanoid" id="C0NM08"/>
<dbReference type="Proteomes" id="UP000001631">
    <property type="component" value="Unassembled WGS sequence"/>
</dbReference>
<dbReference type="GO" id="GO:0005576">
    <property type="term" value="C:extracellular region"/>
    <property type="evidence" value="ECO:0007669"/>
    <property type="project" value="UniProtKB-SubCell"/>
</dbReference>
<dbReference type="GO" id="GO:0005773">
    <property type="term" value="C:vacuole"/>
    <property type="evidence" value="ECO:0007669"/>
    <property type="project" value="UniProtKB-SubCell"/>
</dbReference>
<dbReference type="GO" id="GO:0008270">
    <property type="term" value="F:zinc ion binding"/>
    <property type="evidence" value="ECO:0007669"/>
    <property type="project" value="InterPro"/>
</dbReference>
<dbReference type="GO" id="GO:0071555">
    <property type="term" value="P:cell wall organization"/>
    <property type="evidence" value="ECO:0007669"/>
    <property type="project" value="UniProtKB-KW"/>
</dbReference>
<dbReference type="GO" id="GO:0006508">
    <property type="term" value="P:proteolysis"/>
    <property type="evidence" value="ECO:0007669"/>
    <property type="project" value="InterPro"/>
</dbReference>
<dbReference type="CDD" id="cd03860">
    <property type="entry name" value="M14_CP_A-B_like"/>
    <property type="match status" value="1"/>
</dbReference>
<dbReference type="FunFam" id="3.40.630.10:FF:000060">
    <property type="entry name" value="Putative metallocarboxypeptidase ecm14"/>
    <property type="match status" value="1"/>
</dbReference>
<dbReference type="Gene3D" id="3.40.630.10">
    <property type="entry name" value="Zn peptidases"/>
    <property type="match status" value="1"/>
</dbReference>
<dbReference type="InterPro" id="IPR000834">
    <property type="entry name" value="Peptidase_M14"/>
</dbReference>
<dbReference type="PANTHER" id="PTHR11705:SF147">
    <property type="entry name" value="INACTIVE METALLOCARBOXYPEPTIDASE ECM14"/>
    <property type="match status" value="1"/>
</dbReference>
<dbReference type="PANTHER" id="PTHR11705">
    <property type="entry name" value="PROTEASE FAMILY M14 CARBOXYPEPTIDASE A,B"/>
    <property type="match status" value="1"/>
</dbReference>
<dbReference type="Pfam" id="PF00246">
    <property type="entry name" value="Peptidase_M14"/>
    <property type="match status" value="1"/>
</dbReference>
<dbReference type="PRINTS" id="PR00765">
    <property type="entry name" value="CRBOXYPTASEA"/>
</dbReference>
<dbReference type="SMART" id="SM00631">
    <property type="entry name" value="Zn_pept"/>
    <property type="match status" value="1"/>
</dbReference>
<dbReference type="SUPFAM" id="SSF53187">
    <property type="entry name" value="Zn-dependent exopeptidases"/>
    <property type="match status" value="1"/>
</dbReference>
<dbReference type="PROSITE" id="PS52035">
    <property type="entry name" value="PEPTIDASE_M14"/>
    <property type="match status" value="1"/>
</dbReference>
<keyword id="KW-0961">Cell wall biogenesis/degradation</keyword>
<keyword id="KW-1015">Disulfide bond</keyword>
<keyword id="KW-0325">Glycoprotein</keyword>
<keyword id="KW-0479">Metal-binding</keyword>
<keyword id="KW-1185">Reference proteome</keyword>
<keyword id="KW-0964">Secreted</keyword>
<keyword id="KW-0732">Signal</keyword>
<keyword id="KW-0926">Vacuole</keyword>
<keyword id="KW-0862">Zinc</keyword>
<reference key="1">
    <citation type="submission" date="2009-02" db="EMBL/GenBank/DDBJ databases">
        <title>The genome sequence of Ajellomyces capsulatus strain G186AR.</title>
        <authorList>
            <person name="Champion M."/>
            <person name="Cuomo C.A."/>
            <person name="Ma L.-J."/>
            <person name="Henn M.R."/>
            <person name="Sil A."/>
            <person name="Goldman B."/>
            <person name="Young S.K."/>
            <person name="Kodira C.D."/>
            <person name="Zeng Q."/>
            <person name="Koehrsen M."/>
            <person name="Alvarado L."/>
            <person name="Berlin A."/>
            <person name="Borenstein D."/>
            <person name="Chen Z."/>
            <person name="Engels R."/>
            <person name="Freedman E."/>
            <person name="Gellesch M."/>
            <person name="Goldberg J."/>
            <person name="Griggs A."/>
            <person name="Gujja S."/>
            <person name="Heiman D."/>
            <person name="Hepburn T."/>
            <person name="Howarth C."/>
            <person name="Jen D."/>
            <person name="Larson L."/>
            <person name="Lewis B."/>
            <person name="Mehta T."/>
            <person name="Park D."/>
            <person name="Pearson M."/>
            <person name="Roberts A."/>
            <person name="Saif S."/>
            <person name="Shea T."/>
            <person name="Shenoy N."/>
            <person name="Sisk P."/>
            <person name="Stolte C."/>
            <person name="Sykes S."/>
            <person name="Walk T."/>
            <person name="White J."/>
            <person name="Yandava C."/>
            <person name="Klein B."/>
            <person name="McEwen J.G."/>
            <person name="Puccia R."/>
            <person name="Goldman G.H."/>
            <person name="Felipe M.S."/>
            <person name="Nino-Vega G."/>
            <person name="San-Blas G."/>
            <person name="Taylor J."/>
            <person name="Mendoza L."/>
            <person name="Galagan J.E."/>
            <person name="Nusbaum C."/>
            <person name="Birren B.W."/>
        </authorList>
    </citation>
    <scope>NUCLEOTIDE SEQUENCE [LARGE SCALE GENOMIC DNA]</scope>
    <source>
        <strain>G186AR / H82 / ATCC MYA-2454 / RMSCC 2432</strain>
    </source>
</reference>
<name>ECM14_AJECG</name>
<proteinExistence type="inferred from homology"/>
<evidence type="ECO:0000250" key="1">
    <source>
        <dbReference type="UniProtKB" id="P00730"/>
    </source>
</evidence>
<evidence type="ECO:0000250" key="2">
    <source>
        <dbReference type="UniProtKB" id="P15085"/>
    </source>
</evidence>
<evidence type="ECO:0000250" key="3">
    <source>
        <dbReference type="UniProtKB" id="P38836"/>
    </source>
</evidence>
<evidence type="ECO:0000255" key="4"/>
<evidence type="ECO:0000255" key="5">
    <source>
        <dbReference type="PROSITE-ProRule" id="PRU01379"/>
    </source>
</evidence>
<evidence type="ECO:0000256" key="6">
    <source>
        <dbReference type="SAM" id="MobiDB-lite"/>
    </source>
</evidence>
<evidence type="ECO:0000305" key="7"/>
<organism>
    <name type="scientific">Ajellomyces capsulatus (strain G186AR / H82 / ATCC MYA-2454 / RMSCC 2432)</name>
    <name type="common">Darling's disease fungus</name>
    <name type="synonym">Histoplasma capsulatum</name>
    <dbReference type="NCBI Taxonomy" id="447093"/>
    <lineage>
        <taxon>Eukaryota</taxon>
        <taxon>Fungi</taxon>
        <taxon>Dikarya</taxon>
        <taxon>Ascomycota</taxon>
        <taxon>Pezizomycotina</taxon>
        <taxon>Eurotiomycetes</taxon>
        <taxon>Eurotiomycetidae</taxon>
        <taxon>Onygenales</taxon>
        <taxon>Ajellomycetaceae</taxon>
        <taxon>Histoplasma</taxon>
    </lineage>
</organism>
<accession>C0NM08</accession>
<feature type="signal peptide" evidence="4">
    <location>
        <begin position="1"/>
        <end position="21"/>
    </location>
</feature>
<feature type="propeptide" id="PRO_0000453227" evidence="3">
    <location>
        <begin position="22"/>
        <end position="174"/>
    </location>
</feature>
<feature type="chain" id="PRO_0000411168" description="Inactive metallocarboxypeptidase ECM14">
    <location>
        <begin position="175"/>
        <end position="597"/>
    </location>
</feature>
<feature type="domain" description="Peptidase M14" evidence="5">
    <location>
        <begin position="202"/>
        <end position="522"/>
    </location>
</feature>
<feature type="region of interest" description="Disordered" evidence="6">
    <location>
        <begin position="170"/>
        <end position="189"/>
    </location>
</feature>
<feature type="region of interest" description="Disordered" evidence="6">
    <location>
        <begin position="543"/>
        <end position="597"/>
    </location>
</feature>
<feature type="compositionally biased region" description="Low complexity" evidence="6">
    <location>
        <begin position="170"/>
        <end position="179"/>
    </location>
</feature>
<feature type="compositionally biased region" description="Acidic residues" evidence="6">
    <location>
        <begin position="550"/>
        <end position="561"/>
    </location>
</feature>
<feature type="compositionally biased region" description="Basic and acidic residues" evidence="6">
    <location>
        <begin position="563"/>
        <end position="580"/>
    </location>
</feature>
<feature type="binding site" evidence="1">
    <location>
        <begin position="264"/>
        <end position="267"/>
    </location>
    <ligand>
        <name>substrate</name>
    </ligand>
</feature>
<feature type="binding site" evidence="5">
    <location>
        <position position="264"/>
    </location>
    <ligand>
        <name>Zn(2+)</name>
        <dbReference type="ChEBI" id="CHEBI:29105"/>
        <note>catalytic</note>
    </ligand>
</feature>
<feature type="binding site" evidence="5">
    <location>
        <position position="267"/>
    </location>
    <ligand>
        <name>Zn(2+)</name>
        <dbReference type="ChEBI" id="CHEBI:29105"/>
        <note>catalytic</note>
    </ligand>
</feature>
<feature type="binding site" evidence="1">
    <location>
        <position position="322"/>
    </location>
    <ligand>
        <name>substrate</name>
    </ligand>
</feature>
<feature type="binding site" evidence="1">
    <location>
        <begin position="339"/>
        <end position="340"/>
    </location>
    <ligand>
        <name>substrate</name>
    </ligand>
</feature>
<feature type="binding site" evidence="5">
    <location>
        <position position="396"/>
    </location>
    <ligand>
        <name>Zn(2+)</name>
        <dbReference type="ChEBI" id="CHEBI:29105"/>
        <note>catalytic</note>
    </ligand>
</feature>
<feature type="binding site" evidence="1">
    <location>
        <begin position="397"/>
        <end position="398"/>
    </location>
    <ligand>
        <name>substrate</name>
    </ligand>
</feature>
<feature type="glycosylation site" description="N-linked (GlcNAc...) asparagine" evidence="4">
    <location>
        <position position="349"/>
    </location>
</feature>
<feature type="disulfide bond" evidence="2">
    <location>
        <begin position="333"/>
        <end position="356"/>
    </location>
</feature>